<keyword id="KW-0002">3D-structure</keyword>
<keyword id="KW-0106">Calcium</keyword>
<keyword id="KW-0175">Coiled coil</keyword>
<keyword id="KW-0963">Cytoplasm</keyword>
<keyword id="KW-0254">Endocytosis</keyword>
<keyword id="KW-1017">Isopeptide bond</keyword>
<keyword id="KW-0479">Metal-binding</keyword>
<keyword id="KW-0597">Phosphoprotein</keyword>
<keyword id="KW-1185">Reference proteome</keyword>
<keyword id="KW-0677">Repeat</keyword>
<keyword id="KW-0832">Ubl conjugation</keyword>
<reference key="1">
    <citation type="journal article" date="1994" name="EMBO J.">
        <title>Complete DNA sequence of yeast chromosome II.</title>
        <authorList>
            <person name="Feldmann H."/>
            <person name="Aigle M."/>
            <person name="Aljinovic G."/>
            <person name="Andre B."/>
            <person name="Baclet M.C."/>
            <person name="Barthe C."/>
            <person name="Baur A."/>
            <person name="Becam A.-M."/>
            <person name="Biteau N."/>
            <person name="Boles E."/>
            <person name="Brandt T."/>
            <person name="Brendel M."/>
            <person name="Brueckner M."/>
            <person name="Bussereau F."/>
            <person name="Christiansen C."/>
            <person name="Contreras R."/>
            <person name="Crouzet M."/>
            <person name="Cziepluch C."/>
            <person name="Demolis N."/>
            <person name="Delaveau T."/>
            <person name="Doignon F."/>
            <person name="Domdey H."/>
            <person name="Duesterhus S."/>
            <person name="Dubois E."/>
            <person name="Dujon B."/>
            <person name="El Bakkoury M."/>
            <person name="Entian K.-D."/>
            <person name="Feuermann M."/>
            <person name="Fiers W."/>
            <person name="Fobo G.M."/>
            <person name="Fritz C."/>
            <person name="Gassenhuber J."/>
            <person name="Glansdorff N."/>
            <person name="Goffeau A."/>
            <person name="Grivell L.A."/>
            <person name="de Haan M."/>
            <person name="Hein C."/>
            <person name="Herbert C.J."/>
            <person name="Hollenberg C.P."/>
            <person name="Holmstroem K."/>
            <person name="Jacq C."/>
            <person name="Jacquet M."/>
            <person name="Jauniaux J.-C."/>
            <person name="Jonniaux J.-L."/>
            <person name="Kallesoee T."/>
            <person name="Kiesau P."/>
            <person name="Kirchrath L."/>
            <person name="Koetter P."/>
            <person name="Korol S."/>
            <person name="Liebl S."/>
            <person name="Logghe M."/>
            <person name="Lohan A.J.E."/>
            <person name="Louis E.J."/>
            <person name="Li Z.Y."/>
            <person name="Maat M.J."/>
            <person name="Mallet L."/>
            <person name="Mannhaupt G."/>
            <person name="Messenguy F."/>
            <person name="Miosga T."/>
            <person name="Molemans F."/>
            <person name="Mueller S."/>
            <person name="Nasr F."/>
            <person name="Obermaier B."/>
            <person name="Perea J."/>
            <person name="Pierard A."/>
            <person name="Piravandi E."/>
            <person name="Pohl F.M."/>
            <person name="Pohl T.M."/>
            <person name="Potier S."/>
            <person name="Proft M."/>
            <person name="Purnelle B."/>
            <person name="Ramezani Rad M."/>
            <person name="Rieger M."/>
            <person name="Rose M."/>
            <person name="Schaaff-Gerstenschlaeger I."/>
            <person name="Scherens B."/>
            <person name="Schwarzlose C."/>
            <person name="Skala J."/>
            <person name="Slonimski P.P."/>
            <person name="Smits P.H.M."/>
            <person name="Souciet J.-L."/>
            <person name="Steensma H.Y."/>
            <person name="Stucka R."/>
            <person name="Urrestarazu L.A."/>
            <person name="van der Aart Q.J.M."/>
            <person name="Van Dyck L."/>
            <person name="Vassarotti A."/>
            <person name="Vetter I."/>
            <person name="Vierendeels F."/>
            <person name="Vissers S."/>
            <person name="Wagner G."/>
            <person name="de Wergifosse P."/>
            <person name="Wolfe K.H."/>
            <person name="Zagulski M."/>
            <person name="Zimmermann F.K."/>
            <person name="Mewes H.-W."/>
            <person name="Kleine K."/>
        </authorList>
    </citation>
    <scope>NUCLEOTIDE SEQUENCE [LARGE SCALE GENOMIC DNA]</scope>
    <source>
        <strain>ATCC 204508 / S288c</strain>
    </source>
</reference>
<reference key="2">
    <citation type="journal article" date="2014" name="G3 (Bethesda)">
        <title>The reference genome sequence of Saccharomyces cerevisiae: Then and now.</title>
        <authorList>
            <person name="Engel S.R."/>
            <person name="Dietrich F.S."/>
            <person name="Fisk D.G."/>
            <person name="Binkley G."/>
            <person name="Balakrishnan R."/>
            <person name="Costanzo M.C."/>
            <person name="Dwight S.S."/>
            <person name="Hitz B.C."/>
            <person name="Karra K."/>
            <person name="Nash R.S."/>
            <person name="Weng S."/>
            <person name="Wong E.D."/>
            <person name="Lloyd P."/>
            <person name="Skrzypek M.S."/>
            <person name="Miyasato S.R."/>
            <person name="Simison M."/>
            <person name="Cherry J.M."/>
        </authorList>
    </citation>
    <scope>GENOME REANNOTATION</scope>
    <source>
        <strain>ATCC 204508 / S288c</strain>
    </source>
</reference>
<reference key="3">
    <citation type="journal article" date="1994" name="Yeast">
        <title>The sequence of a 22.4 kb DNA fragment from the left arm of yeast chromosome II reveals homologues to bacterial proline synthetase and murine alpha-adaptin, as well as a new permease and a DNA-binding protein.</title>
        <authorList>
            <person name="de Wergifosse P."/>
            <person name="Jacques B."/>
            <person name="Jonniaux J.-L."/>
            <person name="Purnelle B."/>
            <person name="Skala J."/>
            <person name="Goffeau A."/>
        </authorList>
    </citation>
    <scope>NUCLEOTIDE SEQUENCE [GENOMIC DNA] OF 1-961</scope>
    <source>
        <strain>ATCC 204508 / S288c</strain>
    </source>
</reference>
<reference key="4">
    <citation type="journal article" date="1993" name="Yeast">
        <title>Sequencing and functional analysis of a 32,560 bp segment on the left arm of yeast chromosome II. Identification of 26 open reading frames, including the KIP1 and SEC17 genes.</title>
        <authorList>
            <person name="Scherens B."/>
            <person name="el Bakkoury M."/>
            <person name="Vierendeels F."/>
            <person name="Dubois E."/>
            <person name="Messenguy F."/>
        </authorList>
    </citation>
    <scope>NUCLEOTIDE SEQUENCE [GENOMIC DNA] OF 579-1381</scope>
    <source>
        <strain>ATCC 204508 / S288c</strain>
    </source>
</reference>
<reference key="5">
    <citation type="journal article" date="2000" name="J. Cell Sci.">
        <title>A novel EH domain protein of Saccharomyces cerevisiae, Ede1p, involved in endocytosis.</title>
        <authorList>
            <person name="Gagny B."/>
            <person name="Wiederkehr A."/>
            <person name="Dumoulin P."/>
            <person name="Winsor B."/>
            <person name="Riezman H."/>
            <person name="Haguenauer-Tsapis R."/>
        </authorList>
    </citation>
    <scope>FUNCTION</scope>
    <scope>SUBCELLULAR LOCATION</scope>
    <scope>DISRUPTION PHENOTYPE</scope>
</reference>
<reference key="6">
    <citation type="journal article" date="2001" name="Mol. Biol. Cell">
        <title>A genomic study of the bipolar bud site selection pattern in Saccharomyces cerevisiae.</title>
        <authorList>
            <person name="Ni L."/>
            <person name="Snyder M."/>
        </authorList>
    </citation>
    <scope>DISRUPTION PHENOTYPE</scope>
    <scope>SUBCELLULAR LOCATION</scope>
</reference>
<reference key="7">
    <citation type="journal article" date="2003" name="J. Biol. Chem.">
        <title>The yeast Epsin Ent1 is recruited to membranes through multiple independent interactions.</title>
        <authorList>
            <person name="Aguilar R.C."/>
            <person name="Watson H.A."/>
            <person name="Wendland B."/>
        </authorList>
    </citation>
    <scope>FUNCTION</scope>
    <scope>INTERACTION WITH UBIQUITIN AND ENT1</scope>
    <scope>REGION</scope>
</reference>
<reference key="8">
    <citation type="journal article" date="2003" name="Nature">
        <title>Global analysis of protein localization in budding yeast.</title>
        <authorList>
            <person name="Huh W.-K."/>
            <person name="Falvo J.V."/>
            <person name="Gerke L.C."/>
            <person name="Carroll A.S."/>
            <person name="Howson R.W."/>
            <person name="Weissman J.S."/>
            <person name="O'Shea E.K."/>
        </authorList>
    </citation>
    <scope>SUBCELLULAR LOCATION [LARGE SCALE ANALYSIS]</scope>
</reference>
<reference key="9">
    <citation type="journal article" date="2003" name="Nature">
        <title>Global analysis of protein expression in yeast.</title>
        <authorList>
            <person name="Ghaemmaghami S."/>
            <person name="Huh W.-K."/>
            <person name="Bower K."/>
            <person name="Howson R.W."/>
            <person name="Belle A."/>
            <person name="Dephoure N."/>
            <person name="O'Shea E.K."/>
            <person name="Weissman J.S."/>
        </authorList>
    </citation>
    <scope>LEVEL OF PROTEIN EXPRESSION [LARGE SCALE ANALYSIS]</scope>
</reference>
<reference key="10">
    <citation type="journal article" date="2005" name="Cell">
        <title>A modular design for the clathrin- and actin-mediated endocytosis machinery.</title>
        <authorList>
            <person name="Kaksonen M."/>
            <person name="Toret C.P."/>
            <person name="Drubin D.G."/>
        </authorList>
    </citation>
    <scope>FUNCTION</scope>
    <scope>DISRUPTION MUTANT</scope>
</reference>
<reference key="11">
    <citation type="journal article" date="2005" name="Mol. Cell. Proteomics">
        <title>Quantitative phosphoproteomics applied to the yeast pheromone signaling pathway.</title>
        <authorList>
            <person name="Gruhler A."/>
            <person name="Olsen J.V."/>
            <person name="Mohammed S."/>
            <person name="Mortensen P."/>
            <person name="Faergeman N.J."/>
            <person name="Mann M."/>
            <person name="Jensen O.N."/>
        </authorList>
    </citation>
    <scope>PHOSPHORYLATION [LARGE SCALE ANALYSIS] AT SER-241</scope>
    <scope>IDENTIFICATION BY MASS SPECTROMETRY [LARGE SCALE ANALYSIS]</scope>
    <source>
        <strain>YAL6B</strain>
    </source>
</reference>
<reference key="12">
    <citation type="journal article" date="2007" name="J. Proteome Res.">
        <title>Large-scale phosphorylation analysis of alpha-factor-arrested Saccharomyces cerevisiae.</title>
        <authorList>
            <person name="Li X."/>
            <person name="Gerber S.A."/>
            <person name="Rudner A.D."/>
            <person name="Beausoleil S.A."/>
            <person name="Haas W."/>
            <person name="Villen J."/>
            <person name="Elias J.E."/>
            <person name="Gygi S.P."/>
        </authorList>
    </citation>
    <scope>PHOSPHORYLATION [LARGE SCALE ANALYSIS] AT THR-238; SER-241; SER-244; THR-245; SER-248; SER-249; THR-487; SER-1093; SER-1096; SER-1100 AND THR-1307</scope>
    <scope>IDENTIFICATION BY MASS SPECTROMETRY [LARGE SCALE ANALYSIS]</scope>
    <source>
        <strain>ADR376</strain>
    </source>
</reference>
<reference key="13">
    <citation type="journal article" date="2007" name="Proc. Natl. Acad. Sci. U.S.A.">
        <title>Analysis of phosphorylation sites on proteins from Saccharomyces cerevisiae by electron transfer dissociation (ETD) mass spectrometry.</title>
        <authorList>
            <person name="Chi A."/>
            <person name="Huttenhower C."/>
            <person name="Geer L.Y."/>
            <person name="Coon J.J."/>
            <person name="Syka J.E.P."/>
            <person name="Bai D.L."/>
            <person name="Shabanowitz J."/>
            <person name="Burke D.J."/>
            <person name="Troyanskaya O.G."/>
            <person name="Hunt D.F."/>
        </authorList>
    </citation>
    <scope>PHOSPHORYLATION [LARGE SCALE ANALYSIS] AT SER-1093 AND SER-1100</scope>
    <scope>IDENTIFICATION BY MASS SPECTROMETRY [LARGE SCALE ANALYSIS]</scope>
</reference>
<reference key="14">
    <citation type="journal article" date="2008" name="Mol. Biol. Cell">
        <title>Interaction between Epsin/Yap180 adaptors and the scaffolds Ede1/Pan1 is required for endocytosis.</title>
        <authorList>
            <person name="Maldonado-Baez L."/>
            <person name="Dores M.R."/>
            <person name="Perkins E.M."/>
            <person name="Drivas T.G."/>
            <person name="Hicke L."/>
            <person name="Wendland B."/>
        </authorList>
    </citation>
    <scope>FUNCTION</scope>
    <scope>SUBCELLULAR LOCATION</scope>
    <scope>MUTAGENESIS OF TRP-56; TRP-176 AND TRP-319</scope>
</reference>
<reference key="15">
    <citation type="journal article" date="2008" name="Mol. Cell. Proteomics">
        <title>A multidimensional chromatography technology for in-depth phosphoproteome analysis.</title>
        <authorList>
            <person name="Albuquerque C.P."/>
            <person name="Smolka M.B."/>
            <person name="Payne S.H."/>
            <person name="Bafna V."/>
            <person name="Eng J."/>
            <person name="Zhou H."/>
        </authorList>
    </citation>
    <scope>PHOSPHORYLATION [LARGE SCALE ANALYSIS] AT SER-241; SER-265; SER-419; SER-495; SER-848; SER-931; SER-950; SER-1069; SER-1087; SER-1093; SER-1100; THR-1111 AND THR-1307</scope>
    <scope>IDENTIFICATION BY MASS SPECTROMETRY [LARGE SCALE ANALYSIS]</scope>
</reference>
<reference key="16">
    <citation type="journal article" date="2009" name="Science">
        <title>Global analysis of Cdk1 substrate phosphorylation sites provides insights into evolution.</title>
        <authorList>
            <person name="Holt L.J."/>
            <person name="Tuch B.B."/>
            <person name="Villen J."/>
            <person name="Johnson A.D."/>
            <person name="Gygi S.P."/>
            <person name="Morgan D.O."/>
        </authorList>
    </citation>
    <scope>PHOSPHORYLATION [LARGE SCALE ANALYSIS] AT SER-241; SER-244; THR-245; SER-248; THR-251; THR-450; THR-477; SER-495; SER-931; SER-964; SER-1008; SER-1012; SER-1020; THR-1046; SER-1087; SER-1093; SER-1095; SER-1096; SER-1100; SER-1181; SER-1187 AND SER-1343</scope>
    <scope>IDENTIFICATION BY MASS SPECTROMETRY [LARGE SCALE ANALYSIS]</scope>
</reference>
<reference key="17">
    <citation type="journal article" date="2012" name="Mol. Biol. Cell">
        <title>Analysis of yeast endocytic site formation and maturation through a regulatory transition point.</title>
        <authorList>
            <person name="Carroll S.Y."/>
            <person name="Stimpson H.E."/>
            <person name="Weinberg J."/>
            <person name="Toret C.P."/>
            <person name="Sun Y."/>
            <person name="Drubin D.G."/>
        </authorList>
    </citation>
    <scope>FUNCTION</scope>
    <scope>SUBCELLULAR LOCATION</scope>
    <scope>INTERACTION WITH PAL1</scope>
</reference>
<reference key="18">
    <citation type="journal article" date="2012" name="Proteomics">
        <title>Sites of ubiquitin attachment in Saccharomyces cerevisiae.</title>
        <authorList>
            <person name="Starita L.M."/>
            <person name="Lo R.S."/>
            <person name="Eng J.K."/>
            <person name="von Haller P.D."/>
            <person name="Fields S."/>
        </authorList>
    </citation>
    <scope>UBIQUITINATION [LARGE SCALE ANALYSIS] AT LYS-674 AND LYS-1329</scope>
    <scope>IDENTIFICATION BY MASS SPECTROMETRY [LARGE SCALE ANALYSIS]</scope>
</reference>
<reference key="19">
    <citation type="journal article" date="2006" name="J. Mol. Biol.">
        <title>Structural basis for monoubiquitin recognition by the Ede1 UBA domain.</title>
        <authorList>
            <person name="Swanson K.A."/>
            <person name="Hicke L."/>
            <person name="Radhakrishnan I."/>
        </authorList>
    </citation>
    <scope>STRUCTURE BY NMR OF 1339-1381 IN COMPLEX WITH MONOUBIQUITIN</scope>
    <scope>IDENTIFICATION BY MASS SPECTROMETRY</scope>
    <scope>INTERACTION WITH MONOUBIQUITIN</scope>
    <scope>UBA DOMAIN</scope>
    <scope>MUTAGENESIS OF MET-1352; LEU-1370; THR-1374 AND LEU-1378</scope>
</reference>
<reference key="20">
    <citation type="journal article" date="2009" name="EMBO J.">
        <title>Syp1 is a conserved endocytic adaptor that contains domains involved in cargo selection and membrane tubulation.</title>
        <authorList>
            <person name="Reider A."/>
            <person name="Barker S.L."/>
            <person name="Mishra S.K."/>
            <person name="Im Y.J."/>
            <person name="Maldonado-Baez L."/>
            <person name="Hurley J.H."/>
            <person name="Traub L.M."/>
            <person name="Wendland B."/>
        </authorList>
    </citation>
    <scope>INTERACTION WITH SYP1</scope>
    <scope>SUBCELLULAR LOCATION</scope>
    <scope>FUNCTION</scope>
</reference>
<reference key="21">
    <citation type="journal article" date="2009" name="Mol. Biol. Cell">
        <title>Early-arriving Syp1p and Ede1p function in endocytic site placement and formation in budding yeast.</title>
        <authorList>
            <person name="Stimpson H.E."/>
            <person name="Toret C.P."/>
            <person name="Cheng A.T."/>
            <person name="Pauly B.S."/>
            <person name="Drubin D.G."/>
        </authorList>
    </citation>
    <scope>SUBCELLULAR LOCATION</scope>
    <scope>FUNCTION</scope>
</reference>
<comment type="function">
    <text evidence="6 8 11 13 14 15 16">Functions at the internalization step of the clathrin-mediated endocytosis (CME) as an early-acting scaffold protein. Requires clathrin adapter proteins, ENT1/2 and YAP1801/2, for normal spatiotemporal dynamics and viability. Binds to biological membranes in a ubiquitin-dependent manner.</text>
</comment>
<comment type="subunit">
    <text evidence="8 12 14 16">Interacts (via UBA domain) with monoubiquitin and ENT1 (via asparagine-proline-phenylalanine tripeptide motif called NPF). Interacts with PAL1 and SYP1.</text>
</comment>
<comment type="interaction">
    <interactant intactId="EBI-21243">
        <id>P34216</id>
    </interactant>
    <interactant intactId="EBI-21900">
        <id>P25623</id>
        <label>SYP1</label>
    </interactant>
    <organismsDiffer>false</organismsDiffer>
    <experiments>7</experiments>
</comment>
<comment type="subcellular location">
    <subcellularLocation>
        <location evidence="6 7 9 13 14 15 16">Cytoplasm</location>
    </subcellularLocation>
    <text>Localized to actin cortical patches concentrated in the developing bud tip in cells with small buds and at the mother-daughter neck in cells undergoing cytokinesis. Localization can be maintained in the absence of polymerized actin filaments.</text>
</comment>
<comment type="disruption phenotype">
    <text evidence="6 7">Random budding pattern and morphological defects. Defects in fluid-phase endocytosis and defective internalization of the pheromone alpha-factor and uracil permease. Deletion has only a small impact on actin cytoskeleton organization. Deletion shows synthetic growth defects with thermosensitive mutants of PAN1, END3 and RSP5.</text>
</comment>
<comment type="miscellaneous">
    <text evidence="10">Present with 1380 molecules/cell in log phase SD medium.</text>
</comment>
<comment type="similarity">
    <text evidence="17">Belongs to the VDP/USO1/EDE1 family.</text>
</comment>
<proteinExistence type="evidence at protein level"/>
<feature type="chain" id="PRO_0000202457" description="EH domain-containing and endocytosis protein 1">
    <location>
        <begin position="1"/>
        <end position="1381"/>
    </location>
</feature>
<feature type="domain" description="EH 1" evidence="2">
    <location>
        <begin position="14"/>
        <end position="113"/>
    </location>
</feature>
<feature type="domain" description="EF-hand 1" evidence="4">
    <location>
        <begin position="47"/>
        <end position="82"/>
    </location>
</feature>
<feature type="domain" description="EH 2" evidence="2">
    <location>
        <begin position="135"/>
        <end position="227"/>
    </location>
</feature>
<feature type="domain" description="EF-hand 2" evidence="4">
    <location>
        <begin position="167"/>
        <end position="202"/>
    </location>
</feature>
<feature type="domain" description="EF-hand 3" evidence="4">
    <location>
        <begin position="276"/>
        <end position="311"/>
    </location>
</feature>
<feature type="domain" description="EH 3" evidence="2">
    <location>
        <begin position="277"/>
        <end position="366"/>
    </location>
</feature>
<feature type="domain" description="UBA" evidence="3">
    <location>
        <begin position="1338"/>
        <end position="1380"/>
    </location>
</feature>
<feature type="region of interest" description="Disordered" evidence="5">
    <location>
        <begin position="389"/>
        <end position="535"/>
    </location>
</feature>
<feature type="region of interest" description="Disordered" evidence="5">
    <location>
        <begin position="898"/>
        <end position="919"/>
    </location>
</feature>
<feature type="region of interest" description="Disordered" evidence="5">
    <location>
        <begin position="933"/>
        <end position="1202"/>
    </location>
</feature>
<feature type="region of interest" description="Disordered" evidence="5">
    <location>
        <begin position="1214"/>
        <end position="1285"/>
    </location>
</feature>
<feature type="region of interest" description="Able to bind biological membranes">
    <location>
        <begin position="1217"/>
        <end position="1381"/>
    </location>
</feature>
<feature type="region of interest" description="Disordered" evidence="5">
    <location>
        <begin position="1298"/>
        <end position="1322"/>
    </location>
</feature>
<feature type="coiled-coil region" evidence="1">
    <location>
        <begin position="593"/>
        <end position="882"/>
    </location>
</feature>
<feature type="compositionally biased region" description="Polar residues" evidence="5">
    <location>
        <begin position="404"/>
        <end position="424"/>
    </location>
</feature>
<feature type="compositionally biased region" description="Polar residues" evidence="5">
    <location>
        <begin position="432"/>
        <end position="447"/>
    </location>
</feature>
<feature type="compositionally biased region" description="Low complexity" evidence="5">
    <location>
        <begin position="448"/>
        <end position="470"/>
    </location>
</feature>
<feature type="compositionally biased region" description="Polar residues" evidence="5">
    <location>
        <begin position="477"/>
        <end position="494"/>
    </location>
</feature>
<feature type="compositionally biased region" description="Basic and acidic residues" evidence="5">
    <location>
        <begin position="905"/>
        <end position="919"/>
    </location>
</feature>
<feature type="compositionally biased region" description="Basic and acidic residues" evidence="5">
    <location>
        <begin position="937"/>
        <end position="957"/>
    </location>
</feature>
<feature type="compositionally biased region" description="Polar residues" evidence="5">
    <location>
        <begin position="960"/>
        <end position="989"/>
    </location>
</feature>
<feature type="compositionally biased region" description="Polar residues" evidence="5">
    <location>
        <begin position="1005"/>
        <end position="1019"/>
    </location>
</feature>
<feature type="compositionally biased region" description="Basic and acidic residues" evidence="5">
    <location>
        <begin position="1021"/>
        <end position="1036"/>
    </location>
</feature>
<feature type="compositionally biased region" description="Polar residues" evidence="5">
    <location>
        <begin position="1037"/>
        <end position="1049"/>
    </location>
</feature>
<feature type="compositionally biased region" description="Polar residues" evidence="5">
    <location>
        <begin position="1061"/>
        <end position="1073"/>
    </location>
</feature>
<feature type="compositionally biased region" description="Polar residues" evidence="5">
    <location>
        <begin position="1093"/>
        <end position="1103"/>
    </location>
</feature>
<feature type="compositionally biased region" description="Acidic residues" evidence="5">
    <location>
        <begin position="1127"/>
        <end position="1139"/>
    </location>
</feature>
<feature type="compositionally biased region" description="Polar residues" evidence="5">
    <location>
        <begin position="1147"/>
        <end position="1164"/>
    </location>
</feature>
<feature type="compositionally biased region" description="Polar residues" evidence="5">
    <location>
        <begin position="1178"/>
        <end position="1195"/>
    </location>
</feature>
<feature type="compositionally biased region" description="Acidic residues" evidence="5">
    <location>
        <begin position="1214"/>
        <end position="1226"/>
    </location>
</feature>
<feature type="compositionally biased region" description="Polar residues" evidence="5">
    <location>
        <begin position="1253"/>
        <end position="1285"/>
    </location>
</feature>
<feature type="binding site" evidence="4">
    <location>
        <position position="180"/>
    </location>
    <ligand>
        <name>Ca(2+)</name>
        <dbReference type="ChEBI" id="CHEBI:29108"/>
    </ligand>
</feature>
<feature type="binding site" evidence="4">
    <location>
        <position position="182"/>
    </location>
    <ligand>
        <name>Ca(2+)</name>
        <dbReference type="ChEBI" id="CHEBI:29108"/>
    </ligand>
</feature>
<feature type="binding site" evidence="4">
    <location>
        <position position="184"/>
    </location>
    <ligand>
        <name>Ca(2+)</name>
        <dbReference type="ChEBI" id="CHEBI:29108"/>
    </ligand>
</feature>
<feature type="binding site" evidence="4">
    <location>
        <position position="191"/>
    </location>
    <ligand>
        <name>Ca(2+)</name>
        <dbReference type="ChEBI" id="CHEBI:29108"/>
    </ligand>
</feature>
<feature type="modified residue" description="Phosphothreonine" evidence="20">
    <location>
        <position position="238"/>
    </location>
</feature>
<feature type="modified residue" description="Phosphoserine" evidence="18 20 21 22">
    <location>
        <position position="241"/>
    </location>
</feature>
<feature type="modified residue" description="Phosphoserine" evidence="20 22">
    <location>
        <position position="244"/>
    </location>
</feature>
<feature type="modified residue" description="Phosphothreonine" evidence="20 22">
    <location>
        <position position="245"/>
    </location>
</feature>
<feature type="modified residue" description="Phosphoserine" evidence="20 22">
    <location>
        <position position="248"/>
    </location>
</feature>
<feature type="modified residue" description="Phosphoserine" evidence="20">
    <location>
        <position position="249"/>
    </location>
</feature>
<feature type="modified residue" description="Phosphothreonine" evidence="22">
    <location>
        <position position="251"/>
    </location>
</feature>
<feature type="modified residue" description="Phosphoserine" evidence="21">
    <location>
        <position position="265"/>
    </location>
</feature>
<feature type="modified residue" description="Phosphoserine" evidence="21">
    <location>
        <position position="419"/>
    </location>
</feature>
<feature type="modified residue" description="Phosphothreonine" evidence="22">
    <location>
        <position position="450"/>
    </location>
</feature>
<feature type="modified residue" description="Phosphothreonine" evidence="22">
    <location>
        <position position="477"/>
    </location>
</feature>
<feature type="modified residue" description="Phosphothreonine" evidence="20">
    <location>
        <position position="487"/>
    </location>
</feature>
<feature type="modified residue" description="Phosphoserine" evidence="21 22">
    <location>
        <position position="495"/>
    </location>
</feature>
<feature type="modified residue" description="Phosphoserine" evidence="21">
    <location>
        <position position="848"/>
    </location>
</feature>
<feature type="modified residue" description="Phosphoserine" evidence="21 22">
    <location>
        <position position="931"/>
    </location>
</feature>
<feature type="modified residue" description="Phosphoserine" evidence="21">
    <location>
        <position position="950"/>
    </location>
</feature>
<feature type="modified residue" description="Phosphoserine" evidence="22">
    <location>
        <position position="964"/>
    </location>
</feature>
<feature type="modified residue" description="Phosphoserine" evidence="22">
    <location>
        <position position="1008"/>
    </location>
</feature>
<feature type="modified residue" description="Phosphoserine" evidence="22">
    <location>
        <position position="1012"/>
    </location>
</feature>
<feature type="modified residue" description="Phosphoserine" evidence="22">
    <location>
        <position position="1020"/>
    </location>
</feature>
<feature type="modified residue" description="Phosphothreonine" evidence="22">
    <location>
        <position position="1046"/>
    </location>
</feature>
<feature type="modified residue" description="Phosphoserine" evidence="21">
    <location>
        <position position="1069"/>
    </location>
</feature>
<feature type="modified residue" description="Phosphoserine" evidence="21 22">
    <location>
        <position position="1087"/>
    </location>
</feature>
<feature type="modified residue" description="Phosphoserine" evidence="19 20 21 22">
    <location>
        <position position="1093"/>
    </location>
</feature>
<feature type="modified residue" description="Phosphoserine" evidence="22">
    <location>
        <position position="1095"/>
    </location>
</feature>
<feature type="modified residue" description="Phosphoserine" evidence="20 22">
    <location>
        <position position="1096"/>
    </location>
</feature>
<feature type="modified residue" description="Phosphoserine" evidence="19 20 21 22">
    <location>
        <position position="1100"/>
    </location>
</feature>
<feature type="modified residue" description="Phosphothreonine" evidence="21">
    <location>
        <position position="1111"/>
    </location>
</feature>
<feature type="modified residue" description="Phosphoserine" evidence="22">
    <location>
        <position position="1181"/>
    </location>
</feature>
<feature type="modified residue" description="Phosphoserine" evidence="22">
    <location>
        <position position="1187"/>
    </location>
</feature>
<feature type="modified residue" description="Phosphothreonine" evidence="20 21">
    <location>
        <position position="1307"/>
    </location>
</feature>
<feature type="modified residue" description="Phosphoserine" evidence="22">
    <location>
        <position position="1343"/>
    </location>
</feature>
<feature type="cross-link" description="Glycyl lysine isopeptide (Lys-Gly) (interchain with G-Cter in ubiquitin)" evidence="23">
    <location>
        <position position="674"/>
    </location>
</feature>
<feature type="cross-link" description="Glycyl lysine isopeptide (Lys-Gly) (interchain with G-Cter in ubiquitin)" evidence="23">
    <location>
        <position position="1329"/>
    </location>
</feature>
<feature type="mutagenesis site" description="Abnormal spatiotemporal behavior." evidence="13">
    <original>W</original>
    <variation>A</variation>
    <location>
        <position position="56"/>
    </location>
</feature>
<feature type="mutagenesis site" description="Abnormal spatiotemporal behavior." evidence="13">
    <original>W</original>
    <variation>A</variation>
    <location>
        <position position="176"/>
    </location>
</feature>
<feature type="mutagenesis site" description="Abnormal spatiotemporal behavior." evidence="13">
    <original>W</original>
    <variation>A</variation>
    <location>
        <position position="319"/>
    </location>
</feature>
<feature type="mutagenesis site" description="Reduced ubiquitin-binding." evidence="12">
    <original>M</original>
    <variation>A</variation>
    <location>
        <position position="1352"/>
    </location>
</feature>
<feature type="mutagenesis site" description="Reduced ubiquitin-binding." evidence="12">
    <original>L</original>
    <variation>A</variation>
    <location>
        <position position="1370"/>
    </location>
</feature>
<feature type="mutagenesis site" description="Enhanced ubiquitin-binding." evidence="12">
    <original>T</original>
    <variation>A</variation>
    <location>
        <position position="1374"/>
    </location>
</feature>
<feature type="mutagenesis site" description="Reduced ubiquitin-binding." evidence="12">
    <original>L</original>
    <variation>A</variation>
    <location>
        <position position="1378"/>
    </location>
</feature>
<feature type="helix" evidence="25">
    <location>
        <begin position="1221"/>
        <end position="1223"/>
    </location>
</feature>
<feature type="helix" evidence="25">
    <location>
        <begin position="1229"/>
        <end position="1234"/>
    </location>
</feature>
<feature type="helix" evidence="25">
    <location>
        <begin position="1243"/>
        <end position="1246"/>
    </location>
</feature>
<feature type="helix" evidence="24">
    <location>
        <begin position="1341"/>
        <end position="1350"/>
    </location>
</feature>
<feature type="turn" evidence="24">
    <location>
        <begin position="1351"/>
        <end position="1353"/>
    </location>
</feature>
<feature type="helix" evidence="24">
    <location>
        <begin position="1356"/>
        <end position="1365"/>
    </location>
</feature>
<feature type="helix" evidence="24">
    <location>
        <begin position="1370"/>
        <end position="1378"/>
    </location>
</feature>
<organism>
    <name type="scientific">Saccharomyces cerevisiae (strain ATCC 204508 / S288c)</name>
    <name type="common">Baker's yeast</name>
    <dbReference type="NCBI Taxonomy" id="559292"/>
    <lineage>
        <taxon>Eukaryota</taxon>
        <taxon>Fungi</taxon>
        <taxon>Dikarya</taxon>
        <taxon>Ascomycota</taxon>
        <taxon>Saccharomycotina</taxon>
        <taxon>Saccharomycetes</taxon>
        <taxon>Saccharomycetales</taxon>
        <taxon>Saccharomycetaceae</taxon>
        <taxon>Saccharomyces</taxon>
    </lineage>
</organism>
<evidence type="ECO:0000255" key="1"/>
<evidence type="ECO:0000255" key="2">
    <source>
        <dbReference type="PROSITE-ProRule" id="PRU00077"/>
    </source>
</evidence>
<evidence type="ECO:0000255" key="3">
    <source>
        <dbReference type="PROSITE-ProRule" id="PRU00212"/>
    </source>
</evidence>
<evidence type="ECO:0000255" key="4">
    <source>
        <dbReference type="PROSITE-ProRule" id="PRU00448"/>
    </source>
</evidence>
<evidence type="ECO:0000256" key="5">
    <source>
        <dbReference type="SAM" id="MobiDB-lite"/>
    </source>
</evidence>
<evidence type="ECO:0000269" key="6">
    <source>
    </source>
</evidence>
<evidence type="ECO:0000269" key="7">
    <source>
    </source>
</evidence>
<evidence type="ECO:0000269" key="8">
    <source>
    </source>
</evidence>
<evidence type="ECO:0000269" key="9">
    <source>
    </source>
</evidence>
<evidence type="ECO:0000269" key="10">
    <source>
    </source>
</evidence>
<evidence type="ECO:0000269" key="11">
    <source>
    </source>
</evidence>
<evidence type="ECO:0000269" key="12">
    <source>
    </source>
</evidence>
<evidence type="ECO:0000269" key="13">
    <source>
    </source>
</evidence>
<evidence type="ECO:0000269" key="14">
    <source>
    </source>
</evidence>
<evidence type="ECO:0000269" key="15">
    <source>
    </source>
</evidence>
<evidence type="ECO:0000269" key="16">
    <source>
    </source>
</evidence>
<evidence type="ECO:0000305" key="17"/>
<evidence type="ECO:0007744" key="18">
    <source>
    </source>
</evidence>
<evidence type="ECO:0007744" key="19">
    <source>
    </source>
</evidence>
<evidence type="ECO:0007744" key="20">
    <source>
    </source>
</evidence>
<evidence type="ECO:0007744" key="21">
    <source>
    </source>
</evidence>
<evidence type="ECO:0007744" key="22">
    <source>
    </source>
</evidence>
<evidence type="ECO:0007744" key="23">
    <source>
    </source>
</evidence>
<evidence type="ECO:0007829" key="24">
    <source>
        <dbReference type="PDB" id="2G3Q"/>
    </source>
</evidence>
<evidence type="ECO:0007829" key="25">
    <source>
        <dbReference type="PDB" id="6WY6"/>
    </source>
</evidence>
<protein>
    <recommendedName>
        <fullName>EH domain-containing and endocytosis protein 1</fullName>
    </recommendedName>
    <alternativeName>
        <fullName>Bud site selection protein 15</fullName>
    </alternativeName>
</protein>
<sequence length="1381" mass="150783">MASITFRTPLSSQEQAFYNQKFHQLDTEDLGVVTGEAVRPLFASSGLPGQLLSQVWATVDIDNKGFLNLNEFSAALRMIAQLQNAPNQPISAALYESTPTQLASFSINQNPAPMQSGSATGNTNNTDIPALSSNDIAKFSQLFDRTAKGAQTVAGDKAKDIFLKARLPNQTLGEIWALCDRDASGVLDKSEFIMAMYLIQLCMSHHPSMNTPPAVLPTQLWDSIRLEPVVVNQPNRTTPLSANSTGVSSLTRHSTISRLSTGAFSNAASDWSLSFEKKQQFDAIFDSLDKQHAGSLSSAVLVPFFLSSRLNQETLATIWDLADIHNNAEFTKLEFAIAMFLIQKKNAGVELPDVIPNELLQSPALGLYPPNPLPQQQSAPQIAIPSRASKPSLQDMPHQVSAPAVNTQPTVPQVLPQNSNNGSLNDLLALNPSFSSPSPTKAQTVVQNNTNNSFSYDNNNGQATLQQQQPQQPPPLTHSSSGLKKFTPTSNFGQSIIKEEPEEQEQLRESSDTFSAQPPPVPKHASSPVKRTASTTLPQVPNFSVFSMPAGAATSAATGAAVGAAVGAAALGASAFSRSSNNAFKNQDLFADGEASAQLSNATTEMANLSNQVNSLSKQASITNDKKSRATQELKRVTEMKNSIQIKLNNLRSTHDQNVKQTEQLEAQVLQVNKENETLAQQLAVSEANYHAAESKLNELTTDLQESQTKNAELKEQITNLNSMTASLQSQLNEKQQQVKQERSMVDVNSKQLELNQVTVANLQKEIDGLGEKISVYLTKQKELNDYQKTVEEQHAQLQAKYQDLSNKDTDLTDREKQLEERNRQIEEQENLYHQHVSKLQEMFDDLSQRKASFEKADQELKERNIEYANNVRELSERQMNLAMGQLPEDAKDIIAKSASNTDTTTKEATSRGNVHEDTVSKFVETTVENSNLNVNRVKDDEEKTERTESDVFDRDVPTLGSQSDSENANTNNGTQSGNETANPNLTETLSDRFDGDLNEYGIPRSQSLTSSVANNAPQSVRDDVELPETLEERDTINNTANRDNTGNLSHIPGEWEATPATASTDVLSNETTEVIEDGSTTKRANSNEDGESVSSIQESPKISAQPKAKTINEEFPPIQELHIDESDSSSSDDDEFEDTREIPSATVKTLQTPYNAQPTSSLEIHTEQVIKYPAPGTSPSHNEGNSKKASTNSILPVKDEFDDEFAGLEQAAVEEDNGADSESEFENVANAGSMEQFETIDHKDLDDELQMNAFTGTLTSSSNPTIPKPQVQQQSTSDPAQVSNDEWDEIFAGFGNSKAEPTKVATPSIPQQPIPLKNDPIVDASLSKGPIVNRGVATTPKSLAVEELSGMGFTEEEAHNALEKCNWDLEAATNFLLDSA</sequence>
<name>EDE1_YEAST</name>
<accession>P34216</accession>
<accession>D6VPV1</accession>
<gene>
    <name type="primary">EDE1</name>
    <name type="synonym">BUD15</name>
    <name type="ordered locus">YBL047C</name>
    <name type="ORF">YBL0501</name>
    <name type="ORF">YBL0520</name>
</gene>
<dbReference type="EMBL" id="Z35808">
    <property type="protein sequence ID" value="CAA84867.1"/>
    <property type="molecule type" value="Genomic_DNA"/>
</dbReference>
<dbReference type="EMBL" id="X78214">
    <property type="protein sequence ID" value="CAA55048.1"/>
    <property type="molecule type" value="Genomic_DNA"/>
</dbReference>
<dbReference type="EMBL" id="Z23261">
    <property type="protein sequence ID" value="CAA80797.1"/>
    <property type="molecule type" value="Genomic_DNA"/>
</dbReference>
<dbReference type="EMBL" id="BK006936">
    <property type="protein sequence ID" value="DAA07071.1"/>
    <property type="molecule type" value="Genomic_DNA"/>
</dbReference>
<dbReference type="PIR" id="S45781">
    <property type="entry name" value="S45781"/>
</dbReference>
<dbReference type="RefSeq" id="NP_009506.1">
    <property type="nucleotide sequence ID" value="NM_001178287.1"/>
</dbReference>
<dbReference type="PDB" id="2G3Q">
    <property type="method" value="NMR"/>
    <property type="chains" value="A=1339-1381"/>
</dbReference>
<dbReference type="PDB" id="6WY6">
    <property type="method" value="X-ray"/>
    <property type="resolution" value="1.77 A"/>
    <property type="chains" value="C/D=1220-1247"/>
</dbReference>
<dbReference type="PDBsum" id="2G3Q"/>
<dbReference type="PDBsum" id="6WY6"/>
<dbReference type="BMRB" id="P34216"/>
<dbReference type="SMR" id="P34216"/>
<dbReference type="BioGRID" id="32650">
    <property type="interactions" value="377"/>
</dbReference>
<dbReference type="DIP" id="DIP-5817N"/>
<dbReference type="FunCoup" id="P34216">
    <property type="interactions" value="419"/>
</dbReference>
<dbReference type="IntAct" id="P34216">
    <property type="interactions" value="30"/>
</dbReference>
<dbReference type="MINT" id="P34216"/>
<dbReference type="STRING" id="4932.YBL047C"/>
<dbReference type="GlyGen" id="P34216">
    <property type="glycosylation" value="3 sites, 1 O-linked glycan (3 sites)"/>
</dbReference>
<dbReference type="iPTMnet" id="P34216"/>
<dbReference type="PaxDb" id="4932-YBL047C"/>
<dbReference type="PeptideAtlas" id="P34216"/>
<dbReference type="EnsemblFungi" id="YBL047C_mRNA">
    <property type="protein sequence ID" value="YBL047C"/>
    <property type="gene ID" value="YBL047C"/>
</dbReference>
<dbReference type="GeneID" id="852233"/>
<dbReference type="KEGG" id="sce:YBL047C"/>
<dbReference type="AGR" id="SGD:S000000143"/>
<dbReference type="SGD" id="S000000143">
    <property type="gene designation" value="EDE1"/>
</dbReference>
<dbReference type="VEuPathDB" id="FungiDB:YBL047C"/>
<dbReference type="eggNOG" id="KOG0998">
    <property type="taxonomic scope" value="Eukaryota"/>
</dbReference>
<dbReference type="GeneTree" id="ENSGT00940000170943"/>
<dbReference type="HOGENOM" id="CLU_002993_0_0_1"/>
<dbReference type="InParanoid" id="P34216"/>
<dbReference type="OMA" id="DYQKFSQ"/>
<dbReference type="OrthoDB" id="524326at2759"/>
<dbReference type="BioCyc" id="YEAST:G3O-28947-MONOMER"/>
<dbReference type="Reactome" id="R-SCE-416482">
    <property type="pathway name" value="G alpha (12/13) signalling events"/>
</dbReference>
<dbReference type="Reactome" id="R-SCE-8856825">
    <property type="pathway name" value="Cargo recognition for clathrin-mediated endocytosis"/>
</dbReference>
<dbReference type="Reactome" id="R-SCE-8856828">
    <property type="pathway name" value="Clathrin-mediated endocytosis"/>
</dbReference>
<dbReference type="Reactome" id="R-SCE-9013148">
    <property type="pathway name" value="CDC42 GTPase cycle"/>
</dbReference>
<dbReference type="Reactome" id="R-SCE-9013406">
    <property type="pathway name" value="RHOQ GTPase cycle"/>
</dbReference>
<dbReference type="Reactome" id="R-SCE-9013420">
    <property type="pathway name" value="RHOU GTPase cycle"/>
</dbReference>
<dbReference type="BioGRID-ORCS" id="852233">
    <property type="hits" value="9 hits in 10 CRISPR screens"/>
</dbReference>
<dbReference type="CD-CODE" id="7EE86442">
    <property type="entry name" value="Synthetic Condensate 000355"/>
</dbReference>
<dbReference type="CD-CODE" id="E019EF73">
    <property type="entry name" value="Ede1 condensate"/>
</dbReference>
<dbReference type="CD-CODE" id="E03F929F">
    <property type="entry name" value="Stress granule"/>
</dbReference>
<dbReference type="EvolutionaryTrace" id="P34216"/>
<dbReference type="PRO" id="PR:P34216"/>
<dbReference type="Proteomes" id="UP000002311">
    <property type="component" value="Chromosome II"/>
</dbReference>
<dbReference type="RNAct" id="P34216">
    <property type="molecule type" value="protein"/>
</dbReference>
<dbReference type="GO" id="GO:0030479">
    <property type="term" value="C:actin cortical patch"/>
    <property type="evidence" value="ECO:0000314"/>
    <property type="project" value="SGD"/>
</dbReference>
<dbReference type="GO" id="GO:0005935">
    <property type="term" value="C:cellular bud neck"/>
    <property type="evidence" value="ECO:0000314"/>
    <property type="project" value="SGD"/>
</dbReference>
<dbReference type="GO" id="GO:0005934">
    <property type="term" value="C:cellular bud tip"/>
    <property type="evidence" value="ECO:0000314"/>
    <property type="project" value="SGD"/>
</dbReference>
<dbReference type="GO" id="GO:0005737">
    <property type="term" value="C:cytoplasm"/>
    <property type="evidence" value="ECO:0000314"/>
    <property type="project" value="SGD"/>
</dbReference>
<dbReference type="GO" id="GO:0043332">
    <property type="term" value="C:mating projection tip"/>
    <property type="evidence" value="ECO:0007005"/>
    <property type="project" value="SGD"/>
</dbReference>
<dbReference type="GO" id="GO:0005886">
    <property type="term" value="C:plasma membrane"/>
    <property type="evidence" value="ECO:0000318"/>
    <property type="project" value="GO_Central"/>
</dbReference>
<dbReference type="GO" id="GO:0005509">
    <property type="term" value="F:calcium ion binding"/>
    <property type="evidence" value="ECO:0007669"/>
    <property type="project" value="InterPro"/>
</dbReference>
<dbReference type="GO" id="GO:0043130">
    <property type="term" value="F:ubiquitin binding"/>
    <property type="evidence" value="ECO:0000314"/>
    <property type="project" value="SGD"/>
</dbReference>
<dbReference type="GO" id="GO:0044396">
    <property type="term" value="P:actin cortical patch organization"/>
    <property type="evidence" value="ECO:0000315"/>
    <property type="project" value="SGD"/>
</dbReference>
<dbReference type="GO" id="GO:0006897">
    <property type="term" value="P:endocytosis"/>
    <property type="evidence" value="ECO:0000315"/>
    <property type="project" value="SGD"/>
</dbReference>
<dbReference type="GO" id="GO:0030968">
    <property type="term" value="P:endoplasmic reticulum unfolded protein response"/>
    <property type="evidence" value="ECO:0000315"/>
    <property type="project" value="SGD"/>
</dbReference>
<dbReference type="GO" id="GO:0016197">
    <property type="term" value="P:endosomal transport"/>
    <property type="evidence" value="ECO:0000318"/>
    <property type="project" value="GO_Central"/>
</dbReference>
<dbReference type="GO" id="GO:0032467">
    <property type="term" value="P:positive regulation of cytokinesis"/>
    <property type="evidence" value="ECO:0000316"/>
    <property type="project" value="SGD"/>
</dbReference>
<dbReference type="GO" id="GO:0032880">
    <property type="term" value="P:regulation of protein localization"/>
    <property type="evidence" value="ECO:0000315"/>
    <property type="project" value="SGD"/>
</dbReference>
<dbReference type="CDD" id="cd00052">
    <property type="entry name" value="EH"/>
    <property type="match status" value="3"/>
</dbReference>
<dbReference type="CDD" id="cd14285">
    <property type="entry name" value="UBA_scEDE1_like"/>
    <property type="match status" value="1"/>
</dbReference>
<dbReference type="FunFam" id="1.10.238.10:FF:000437">
    <property type="entry name" value="Ede1p"/>
    <property type="match status" value="1"/>
</dbReference>
<dbReference type="FunFam" id="1.10.8.10:FF:000010">
    <property type="entry name" value="Putative ubiquitin-conjugating enzyme e2 k"/>
    <property type="match status" value="1"/>
</dbReference>
<dbReference type="Gene3D" id="1.10.8.10">
    <property type="entry name" value="DNA helicase RuvA subunit, C-terminal domain"/>
    <property type="match status" value="1"/>
</dbReference>
<dbReference type="Gene3D" id="1.10.238.10">
    <property type="entry name" value="EF-hand"/>
    <property type="match status" value="3"/>
</dbReference>
<dbReference type="InterPro" id="IPR011992">
    <property type="entry name" value="EF-hand-dom_pair"/>
</dbReference>
<dbReference type="InterPro" id="IPR018247">
    <property type="entry name" value="EF_Hand_1_Ca_BS"/>
</dbReference>
<dbReference type="InterPro" id="IPR002048">
    <property type="entry name" value="EF_hand_dom"/>
</dbReference>
<dbReference type="InterPro" id="IPR000261">
    <property type="entry name" value="EH_dom"/>
</dbReference>
<dbReference type="InterPro" id="IPR015940">
    <property type="entry name" value="UBA"/>
</dbReference>
<dbReference type="InterPro" id="IPR009060">
    <property type="entry name" value="UBA-like_sf"/>
</dbReference>
<dbReference type="PANTHER" id="PTHR11216:SF170">
    <property type="entry name" value="DYNAMIN ASSOCIATED PROTEIN 160, ISOFORM D"/>
    <property type="match status" value="1"/>
</dbReference>
<dbReference type="PANTHER" id="PTHR11216">
    <property type="entry name" value="EH DOMAIN"/>
    <property type="match status" value="1"/>
</dbReference>
<dbReference type="Pfam" id="PF12763">
    <property type="entry name" value="EH"/>
    <property type="match status" value="3"/>
</dbReference>
<dbReference type="Pfam" id="PF00627">
    <property type="entry name" value="UBA"/>
    <property type="match status" value="1"/>
</dbReference>
<dbReference type="SMART" id="SM00054">
    <property type="entry name" value="EFh"/>
    <property type="match status" value="2"/>
</dbReference>
<dbReference type="SMART" id="SM00027">
    <property type="entry name" value="EH"/>
    <property type="match status" value="3"/>
</dbReference>
<dbReference type="SMART" id="SM00165">
    <property type="entry name" value="UBA"/>
    <property type="match status" value="1"/>
</dbReference>
<dbReference type="SUPFAM" id="SSF47473">
    <property type="entry name" value="EF-hand"/>
    <property type="match status" value="3"/>
</dbReference>
<dbReference type="SUPFAM" id="SSF46934">
    <property type="entry name" value="UBA-like"/>
    <property type="match status" value="1"/>
</dbReference>
<dbReference type="PROSITE" id="PS00018">
    <property type="entry name" value="EF_HAND_1"/>
    <property type="match status" value="1"/>
</dbReference>
<dbReference type="PROSITE" id="PS50222">
    <property type="entry name" value="EF_HAND_2"/>
    <property type="match status" value="3"/>
</dbReference>
<dbReference type="PROSITE" id="PS50031">
    <property type="entry name" value="EH"/>
    <property type="match status" value="3"/>
</dbReference>
<dbReference type="PROSITE" id="PS50030">
    <property type="entry name" value="UBA"/>
    <property type="match status" value="1"/>
</dbReference>